<protein>
    <recommendedName>
        <fullName>SPbeta prophage-derived uncharacterized protein YopF</fullName>
    </recommendedName>
</protein>
<gene>
    <name type="primary">yopF</name>
    <name type="ordered locus">BSU20910</name>
</gene>
<accession>O31932</accession>
<name>YOPF_BACSU</name>
<feature type="chain" id="PRO_0000360463" description="SPbeta prophage-derived uncharacterized protein YopF">
    <location>
        <begin position="1"/>
        <end position="71"/>
    </location>
</feature>
<keyword id="KW-1185">Reference proteome</keyword>
<dbReference type="EMBL" id="AL009126">
    <property type="protein sequence ID" value="CAB14009.1"/>
    <property type="molecule type" value="Genomic_DNA"/>
</dbReference>
<dbReference type="RefSeq" id="NP_389973.1">
    <property type="nucleotide sequence ID" value="NC_000964.3"/>
</dbReference>
<dbReference type="RefSeq" id="WP_004399349.1">
    <property type="nucleotide sequence ID" value="NZ_OZ025638.1"/>
</dbReference>
<dbReference type="SMR" id="O31932"/>
<dbReference type="FunCoup" id="O31932">
    <property type="interactions" value="56"/>
</dbReference>
<dbReference type="STRING" id="224308.BSU20910"/>
<dbReference type="PaxDb" id="224308-BSU20910"/>
<dbReference type="EnsemblBacteria" id="CAB14009">
    <property type="protein sequence ID" value="CAB14009"/>
    <property type="gene ID" value="BSU_20910"/>
</dbReference>
<dbReference type="GeneID" id="939179"/>
<dbReference type="KEGG" id="bsu:BSU20910"/>
<dbReference type="PATRIC" id="fig|224308.179.peg.2281"/>
<dbReference type="InParanoid" id="O31932"/>
<dbReference type="OrthoDB" id="2903648at2"/>
<dbReference type="BioCyc" id="BSUB:BSU20910-MONOMER"/>
<dbReference type="Proteomes" id="UP000001570">
    <property type="component" value="Chromosome"/>
</dbReference>
<reference key="1">
    <citation type="journal article" date="1997" name="Nature">
        <title>The complete genome sequence of the Gram-positive bacterium Bacillus subtilis.</title>
        <authorList>
            <person name="Kunst F."/>
            <person name="Ogasawara N."/>
            <person name="Moszer I."/>
            <person name="Albertini A.M."/>
            <person name="Alloni G."/>
            <person name="Azevedo V."/>
            <person name="Bertero M.G."/>
            <person name="Bessieres P."/>
            <person name="Bolotin A."/>
            <person name="Borchert S."/>
            <person name="Borriss R."/>
            <person name="Boursier L."/>
            <person name="Brans A."/>
            <person name="Braun M."/>
            <person name="Brignell S.C."/>
            <person name="Bron S."/>
            <person name="Brouillet S."/>
            <person name="Bruschi C.V."/>
            <person name="Caldwell B."/>
            <person name="Capuano V."/>
            <person name="Carter N.M."/>
            <person name="Choi S.-K."/>
            <person name="Codani J.-J."/>
            <person name="Connerton I.F."/>
            <person name="Cummings N.J."/>
            <person name="Daniel R.A."/>
            <person name="Denizot F."/>
            <person name="Devine K.M."/>
            <person name="Duesterhoeft A."/>
            <person name="Ehrlich S.D."/>
            <person name="Emmerson P.T."/>
            <person name="Entian K.-D."/>
            <person name="Errington J."/>
            <person name="Fabret C."/>
            <person name="Ferrari E."/>
            <person name="Foulger D."/>
            <person name="Fritz C."/>
            <person name="Fujita M."/>
            <person name="Fujita Y."/>
            <person name="Fuma S."/>
            <person name="Galizzi A."/>
            <person name="Galleron N."/>
            <person name="Ghim S.-Y."/>
            <person name="Glaser P."/>
            <person name="Goffeau A."/>
            <person name="Golightly E.J."/>
            <person name="Grandi G."/>
            <person name="Guiseppi G."/>
            <person name="Guy B.J."/>
            <person name="Haga K."/>
            <person name="Haiech J."/>
            <person name="Harwood C.R."/>
            <person name="Henaut A."/>
            <person name="Hilbert H."/>
            <person name="Holsappel S."/>
            <person name="Hosono S."/>
            <person name="Hullo M.-F."/>
            <person name="Itaya M."/>
            <person name="Jones L.-M."/>
            <person name="Joris B."/>
            <person name="Karamata D."/>
            <person name="Kasahara Y."/>
            <person name="Klaerr-Blanchard M."/>
            <person name="Klein C."/>
            <person name="Kobayashi Y."/>
            <person name="Koetter P."/>
            <person name="Koningstein G."/>
            <person name="Krogh S."/>
            <person name="Kumano M."/>
            <person name="Kurita K."/>
            <person name="Lapidus A."/>
            <person name="Lardinois S."/>
            <person name="Lauber J."/>
            <person name="Lazarevic V."/>
            <person name="Lee S.-M."/>
            <person name="Levine A."/>
            <person name="Liu H."/>
            <person name="Masuda S."/>
            <person name="Mauel C."/>
            <person name="Medigue C."/>
            <person name="Medina N."/>
            <person name="Mellado R.P."/>
            <person name="Mizuno M."/>
            <person name="Moestl D."/>
            <person name="Nakai S."/>
            <person name="Noback M."/>
            <person name="Noone D."/>
            <person name="O'Reilly M."/>
            <person name="Ogawa K."/>
            <person name="Ogiwara A."/>
            <person name="Oudega B."/>
            <person name="Park S.-H."/>
            <person name="Parro V."/>
            <person name="Pohl T.M."/>
            <person name="Portetelle D."/>
            <person name="Porwollik S."/>
            <person name="Prescott A.M."/>
            <person name="Presecan E."/>
            <person name="Pujic P."/>
            <person name="Purnelle B."/>
            <person name="Rapoport G."/>
            <person name="Rey M."/>
            <person name="Reynolds S."/>
            <person name="Rieger M."/>
            <person name="Rivolta C."/>
            <person name="Rocha E."/>
            <person name="Roche B."/>
            <person name="Rose M."/>
            <person name="Sadaie Y."/>
            <person name="Sato T."/>
            <person name="Scanlan E."/>
            <person name="Schleich S."/>
            <person name="Schroeter R."/>
            <person name="Scoffone F."/>
            <person name="Sekiguchi J."/>
            <person name="Sekowska A."/>
            <person name="Seror S.J."/>
            <person name="Serror P."/>
            <person name="Shin B.-S."/>
            <person name="Soldo B."/>
            <person name="Sorokin A."/>
            <person name="Tacconi E."/>
            <person name="Takagi T."/>
            <person name="Takahashi H."/>
            <person name="Takemaru K."/>
            <person name="Takeuchi M."/>
            <person name="Tamakoshi A."/>
            <person name="Tanaka T."/>
            <person name="Terpstra P."/>
            <person name="Tognoni A."/>
            <person name="Tosato V."/>
            <person name="Uchiyama S."/>
            <person name="Vandenbol M."/>
            <person name="Vannier F."/>
            <person name="Vassarotti A."/>
            <person name="Viari A."/>
            <person name="Wambutt R."/>
            <person name="Wedler E."/>
            <person name="Wedler H."/>
            <person name="Weitzenegger T."/>
            <person name="Winters P."/>
            <person name="Wipat A."/>
            <person name="Yamamoto H."/>
            <person name="Yamane K."/>
            <person name="Yasumoto K."/>
            <person name="Yata K."/>
            <person name="Yoshida K."/>
            <person name="Yoshikawa H.-F."/>
            <person name="Zumstein E."/>
            <person name="Yoshikawa H."/>
            <person name="Danchin A."/>
        </authorList>
    </citation>
    <scope>NUCLEOTIDE SEQUENCE [LARGE SCALE GENOMIC DNA]</scope>
    <source>
        <strain>168</strain>
    </source>
</reference>
<organism>
    <name type="scientific">Bacillus subtilis (strain 168)</name>
    <dbReference type="NCBI Taxonomy" id="224308"/>
    <lineage>
        <taxon>Bacteria</taxon>
        <taxon>Bacillati</taxon>
        <taxon>Bacillota</taxon>
        <taxon>Bacilli</taxon>
        <taxon>Bacillales</taxon>
        <taxon>Bacillaceae</taxon>
        <taxon>Bacillus</taxon>
    </lineage>
</organism>
<proteinExistence type="predicted"/>
<sequence length="71" mass="8390">MPLIDYFYVLQFENKEYFKAFKLDESGYLTSSDLHEASKIHNMLEVIEVASELKTKCNVQCEVREIQVVKR</sequence>